<keyword id="KW-1185">Reference proteome</keyword>
<keyword id="KW-0687">Ribonucleoprotein</keyword>
<keyword id="KW-0689">Ribosomal protein</keyword>
<keyword id="KW-0694">RNA-binding</keyword>
<keyword id="KW-0699">rRNA-binding</keyword>
<keyword id="KW-0820">tRNA-binding</keyword>
<gene>
    <name evidence="1" type="primary">rplP</name>
    <name type="ordered locus">Anae109_1918</name>
</gene>
<reference key="1">
    <citation type="journal article" date="2015" name="Genome Announc.">
        <title>Complete genome sequence of Anaeromyxobacter sp. Fw109-5, an anaerobic, metal-reducing bacterium isolated from a contaminated subsurface environment.</title>
        <authorList>
            <person name="Hwang C."/>
            <person name="Copeland A."/>
            <person name="Lucas S."/>
            <person name="Lapidus A."/>
            <person name="Barry K."/>
            <person name="Glavina Del Rio T."/>
            <person name="Dalin E."/>
            <person name="Tice H."/>
            <person name="Pitluck S."/>
            <person name="Sims D."/>
            <person name="Brettin T."/>
            <person name="Bruce D.C."/>
            <person name="Detter J.C."/>
            <person name="Han C.S."/>
            <person name="Schmutz J."/>
            <person name="Larimer F.W."/>
            <person name="Land M.L."/>
            <person name="Hauser L.J."/>
            <person name="Kyrpides N."/>
            <person name="Lykidis A."/>
            <person name="Richardson P."/>
            <person name="Belieav A."/>
            <person name="Sanford R.A."/>
            <person name="Loeffler F.E."/>
            <person name="Fields M.W."/>
        </authorList>
    </citation>
    <scope>NUCLEOTIDE SEQUENCE [LARGE SCALE GENOMIC DNA]</scope>
    <source>
        <strain>Fw109-5</strain>
    </source>
</reference>
<sequence>MLQPARTKYRKMMKGRMRGKAYRGSDLNQGEYGLQATECGWLTARQIEAARVAITRYVKRGGKLWIRVFPDKPITKKPAETRMGTGKGNVEYYVAVVKPGRVLYELAGVDDESAKKAFHLAAHKLPVATKLVKRGSTL</sequence>
<protein>
    <recommendedName>
        <fullName evidence="1">Large ribosomal subunit protein uL16</fullName>
    </recommendedName>
    <alternativeName>
        <fullName evidence="2">50S ribosomal protein L16</fullName>
    </alternativeName>
</protein>
<feature type="chain" id="PRO_1000054575" description="Large ribosomal subunit protein uL16">
    <location>
        <begin position="1"/>
        <end position="138"/>
    </location>
</feature>
<accession>A7HBM5</accession>
<comment type="function">
    <text evidence="1">Binds 23S rRNA and is also seen to make contacts with the A and possibly P site tRNAs.</text>
</comment>
<comment type="subunit">
    <text evidence="1">Part of the 50S ribosomal subunit.</text>
</comment>
<comment type="similarity">
    <text evidence="1">Belongs to the universal ribosomal protein uL16 family.</text>
</comment>
<evidence type="ECO:0000255" key="1">
    <source>
        <dbReference type="HAMAP-Rule" id="MF_01342"/>
    </source>
</evidence>
<evidence type="ECO:0000305" key="2"/>
<organism>
    <name type="scientific">Anaeromyxobacter sp. (strain Fw109-5)</name>
    <dbReference type="NCBI Taxonomy" id="404589"/>
    <lineage>
        <taxon>Bacteria</taxon>
        <taxon>Pseudomonadati</taxon>
        <taxon>Myxococcota</taxon>
        <taxon>Myxococcia</taxon>
        <taxon>Myxococcales</taxon>
        <taxon>Cystobacterineae</taxon>
        <taxon>Anaeromyxobacteraceae</taxon>
        <taxon>Anaeromyxobacter</taxon>
    </lineage>
</organism>
<proteinExistence type="inferred from homology"/>
<dbReference type="EMBL" id="CP000769">
    <property type="protein sequence ID" value="ABS26121.1"/>
    <property type="molecule type" value="Genomic_DNA"/>
</dbReference>
<dbReference type="RefSeq" id="WP_012096700.1">
    <property type="nucleotide sequence ID" value="NC_009675.1"/>
</dbReference>
<dbReference type="SMR" id="A7HBM5"/>
<dbReference type="STRING" id="404589.Anae109_1918"/>
<dbReference type="KEGG" id="afw:Anae109_1918"/>
<dbReference type="eggNOG" id="COG0197">
    <property type="taxonomic scope" value="Bacteria"/>
</dbReference>
<dbReference type="HOGENOM" id="CLU_078858_2_1_7"/>
<dbReference type="OrthoDB" id="9802589at2"/>
<dbReference type="Proteomes" id="UP000006382">
    <property type="component" value="Chromosome"/>
</dbReference>
<dbReference type="GO" id="GO:0022625">
    <property type="term" value="C:cytosolic large ribosomal subunit"/>
    <property type="evidence" value="ECO:0007669"/>
    <property type="project" value="TreeGrafter"/>
</dbReference>
<dbReference type="GO" id="GO:0019843">
    <property type="term" value="F:rRNA binding"/>
    <property type="evidence" value="ECO:0007669"/>
    <property type="project" value="UniProtKB-UniRule"/>
</dbReference>
<dbReference type="GO" id="GO:0003735">
    <property type="term" value="F:structural constituent of ribosome"/>
    <property type="evidence" value="ECO:0007669"/>
    <property type="project" value="InterPro"/>
</dbReference>
<dbReference type="GO" id="GO:0000049">
    <property type="term" value="F:tRNA binding"/>
    <property type="evidence" value="ECO:0007669"/>
    <property type="project" value="UniProtKB-KW"/>
</dbReference>
<dbReference type="GO" id="GO:0006412">
    <property type="term" value="P:translation"/>
    <property type="evidence" value="ECO:0007669"/>
    <property type="project" value="UniProtKB-UniRule"/>
</dbReference>
<dbReference type="CDD" id="cd01433">
    <property type="entry name" value="Ribosomal_L16_L10e"/>
    <property type="match status" value="1"/>
</dbReference>
<dbReference type="FunFam" id="3.90.1170.10:FF:000001">
    <property type="entry name" value="50S ribosomal protein L16"/>
    <property type="match status" value="1"/>
</dbReference>
<dbReference type="Gene3D" id="3.90.1170.10">
    <property type="entry name" value="Ribosomal protein L10e/L16"/>
    <property type="match status" value="1"/>
</dbReference>
<dbReference type="HAMAP" id="MF_01342">
    <property type="entry name" value="Ribosomal_uL16"/>
    <property type="match status" value="1"/>
</dbReference>
<dbReference type="InterPro" id="IPR047873">
    <property type="entry name" value="Ribosomal_uL16"/>
</dbReference>
<dbReference type="InterPro" id="IPR000114">
    <property type="entry name" value="Ribosomal_uL16_bact-type"/>
</dbReference>
<dbReference type="InterPro" id="IPR020798">
    <property type="entry name" value="Ribosomal_uL16_CS"/>
</dbReference>
<dbReference type="InterPro" id="IPR016180">
    <property type="entry name" value="Ribosomal_uL16_dom"/>
</dbReference>
<dbReference type="InterPro" id="IPR036920">
    <property type="entry name" value="Ribosomal_uL16_sf"/>
</dbReference>
<dbReference type="NCBIfam" id="TIGR01164">
    <property type="entry name" value="rplP_bact"/>
    <property type="match status" value="1"/>
</dbReference>
<dbReference type="PANTHER" id="PTHR12220">
    <property type="entry name" value="50S/60S RIBOSOMAL PROTEIN L16"/>
    <property type="match status" value="1"/>
</dbReference>
<dbReference type="PANTHER" id="PTHR12220:SF13">
    <property type="entry name" value="LARGE RIBOSOMAL SUBUNIT PROTEIN UL16M"/>
    <property type="match status" value="1"/>
</dbReference>
<dbReference type="Pfam" id="PF00252">
    <property type="entry name" value="Ribosomal_L16"/>
    <property type="match status" value="1"/>
</dbReference>
<dbReference type="PRINTS" id="PR00060">
    <property type="entry name" value="RIBOSOMALL16"/>
</dbReference>
<dbReference type="SUPFAM" id="SSF54686">
    <property type="entry name" value="Ribosomal protein L16p/L10e"/>
    <property type="match status" value="1"/>
</dbReference>
<dbReference type="PROSITE" id="PS00586">
    <property type="entry name" value="RIBOSOMAL_L16_1"/>
    <property type="match status" value="1"/>
</dbReference>
<name>RL16_ANADF</name>